<feature type="chain" id="PRO_0000182654" description="Polar flagellin B/D">
    <location>
        <begin position="1"/>
        <end position="378"/>
    </location>
</feature>
<feature type="coiled-coil region" evidence="1">
    <location>
        <begin position="103"/>
        <end position="128"/>
    </location>
</feature>
<feature type="coiled-coil region" evidence="1">
    <location>
        <begin position="311"/>
        <end position="340"/>
    </location>
</feature>
<feature type="sequence conflict" description="In Ref. 1; AAC27800." evidence="2" ref="1">
    <original>D</original>
    <variation>V</variation>
    <location>
        <position position="271"/>
    </location>
</feature>
<feature type="sequence conflict" description="In Ref. 1; AAD10272." evidence="2" ref="1">
    <original>A</original>
    <variation>R</variation>
    <location>
        <position position="366"/>
    </location>
</feature>
<keyword id="KW-0975">Bacterial flagellum</keyword>
<keyword id="KW-0175">Coiled coil</keyword>
<keyword id="KW-0964">Secreted</keyword>
<protein>
    <recommendedName>
        <fullName>Polar flagellin B/D</fullName>
    </recommendedName>
</protein>
<organism>
    <name type="scientific">Vibrio parahaemolyticus serotype O3:K6 (strain RIMD 2210633)</name>
    <dbReference type="NCBI Taxonomy" id="223926"/>
    <lineage>
        <taxon>Bacteria</taxon>
        <taxon>Pseudomonadati</taxon>
        <taxon>Pseudomonadota</taxon>
        <taxon>Gammaproteobacteria</taxon>
        <taxon>Vibrionales</taxon>
        <taxon>Vibrionaceae</taxon>
        <taxon>Vibrio</taxon>
    </lineage>
</organism>
<gene>
    <name type="primary">flaB</name>
    <name type="ordered locus">VP2259</name>
</gene>
<gene>
    <name type="primary">flaD</name>
    <name type="ordered locus">VP0790</name>
</gene>
<dbReference type="EMBL" id="AF069392">
    <property type="protein sequence ID" value="AAC27800.1"/>
    <property type="molecule type" value="Genomic_DNA"/>
</dbReference>
<dbReference type="EMBL" id="U12817">
    <property type="protein sequence ID" value="AAD10272.1"/>
    <property type="molecule type" value="Genomic_DNA"/>
</dbReference>
<dbReference type="EMBL" id="BA000031">
    <property type="protein sequence ID" value="BAC59053.1"/>
    <property type="molecule type" value="Genomic_DNA"/>
</dbReference>
<dbReference type="EMBL" id="BA000031">
    <property type="protein sequence ID" value="BAC60522.1"/>
    <property type="molecule type" value="Genomic_DNA"/>
</dbReference>
<dbReference type="RefSeq" id="NP_797169.1">
    <property type="nucleotide sequence ID" value="NC_004603.1"/>
</dbReference>
<dbReference type="RefSeq" id="NP_798638.1">
    <property type="nucleotide sequence ID" value="NC_004603.1"/>
</dbReference>
<dbReference type="RefSeq" id="WP_005481079.1">
    <property type="nucleotide sequence ID" value="NC_004603.1"/>
</dbReference>
<dbReference type="SMR" id="Q56702"/>
<dbReference type="GeneID" id="1189772"/>
<dbReference type="KEGG" id="vpa:VP0790"/>
<dbReference type="KEGG" id="vpa:VP2259"/>
<dbReference type="PATRIC" id="fig|223926.6.peg.2163"/>
<dbReference type="eggNOG" id="COG1344">
    <property type="taxonomic scope" value="Bacteria"/>
</dbReference>
<dbReference type="HOGENOM" id="CLU_011142_7_2_6"/>
<dbReference type="Proteomes" id="UP000002493">
    <property type="component" value="Chromosome 1"/>
</dbReference>
<dbReference type="GO" id="GO:0009288">
    <property type="term" value="C:bacterial-type flagellum"/>
    <property type="evidence" value="ECO:0007669"/>
    <property type="project" value="UniProtKB-SubCell"/>
</dbReference>
<dbReference type="GO" id="GO:0005576">
    <property type="term" value="C:extracellular region"/>
    <property type="evidence" value="ECO:0007669"/>
    <property type="project" value="UniProtKB-SubCell"/>
</dbReference>
<dbReference type="GO" id="GO:0005198">
    <property type="term" value="F:structural molecule activity"/>
    <property type="evidence" value="ECO:0007669"/>
    <property type="project" value="InterPro"/>
</dbReference>
<dbReference type="Gene3D" id="2.60.40.4390">
    <property type="match status" value="1"/>
</dbReference>
<dbReference type="Gene3D" id="6.10.280.190">
    <property type="match status" value="1"/>
</dbReference>
<dbReference type="Gene3D" id="1.20.1330.10">
    <property type="entry name" value="f41 fragment of flagellin, N-terminal domain"/>
    <property type="match status" value="1"/>
</dbReference>
<dbReference type="Gene3D" id="6.10.10.10">
    <property type="entry name" value="Flagellar export chaperone, C-terminal domain"/>
    <property type="match status" value="1"/>
</dbReference>
<dbReference type="InterPro" id="IPR001492">
    <property type="entry name" value="Flagellin"/>
</dbReference>
<dbReference type="InterPro" id="IPR046358">
    <property type="entry name" value="Flagellin_C"/>
</dbReference>
<dbReference type="InterPro" id="IPR042187">
    <property type="entry name" value="Flagellin_C_sub2"/>
</dbReference>
<dbReference type="InterPro" id="IPR010810">
    <property type="entry name" value="Flagellin_hook_IN_motif"/>
</dbReference>
<dbReference type="InterPro" id="IPR001029">
    <property type="entry name" value="Flagellin_N"/>
</dbReference>
<dbReference type="NCBIfam" id="NF006466">
    <property type="entry name" value="PRK08869.1-1"/>
    <property type="match status" value="1"/>
</dbReference>
<dbReference type="NCBIfam" id="NF006468">
    <property type="entry name" value="PRK08869.1-3"/>
    <property type="match status" value="1"/>
</dbReference>
<dbReference type="PANTHER" id="PTHR42792">
    <property type="entry name" value="FLAGELLIN"/>
    <property type="match status" value="1"/>
</dbReference>
<dbReference type="PANTHER" id="PTHR42792:SF2">
    <property type="entry name" value="FLAGELLIN"/>
    <property type="match status" value="1"/>
</dbReference>
<dbReference type="Pfam" id="PF00700">
    <property type="entry name" value="Flagellin_C"/>
    <property type="match status" value="1"/>
</dbReference>
<dbReference type="Pfam" id="PF07196">
    <property type="entry name" value="Flagellin_IN"/>
    <property type="match status" value="1"/>
</dbReference>
<dbReference type="Pfam" id="PF00669">
    <property type="entry name" value="Flagellin_N"/>
    <property type="match status" value="1"/>
</dbReference>
<dbReference type="PRINTS" id="PR00207">
    <property type="entry name" value="FLAGELLIN"/>
</dbReference>
<dbReference type="SUPFAM" id="SSF64518">
    <property type="entry name" value="Phase 1 flagellin"/>
    <property type="match status" value="1"/>
</dbReference>
<evidence type="ECO:0000255" key="1"/>
<evidence type="ECO:0000305" key="2"/>
<name>FLAB_VIBPA</name>
<accession>Q56702</accession>
<accession>Q56713</accession>
<comment type="function">
    <text>Flagellin is the subunit protein which polymerizes to form the filaments of bacterial flagella. FlaB/D is not essential for polar flagellar synthesis and swimming motility. Homomer of FlaB/D is not able to form a functional filament.</text>
</comment>
<comment type="subunit">
    <text>Heteromer of multiple flagellin subunits including FlaA, FlaB/D, FlaC, FlaE and FlaF.</text>
</comment>
<comment type="subcellular location">
    <subcellularLocation>
        <location>Secreted</location>
    </subcellularLocation>
    <subcellularLocation>
        <location>Bacterial flagellum</location>
    </subcellularLocation>
</comment>
<comment type="miscellaneous">
    <text>V.parahaemolyticus possesses two flagellar systems: a single polar flagellum propels the bacterium in liquid (swimming), while multiple lateral (peritrichous) flagella move the bacterium over surfaces (swarming). The polar flagellum is synthesized constitutively but lateral flagella are produced only under conditions in which the polar flagellum is not functional.</text>
</comment>
<comment type="similarity">
    <text evidence="2">Belongs to the bacterial flagellin family.</text>
</comment>
<proteinExistence type="inferred from homology"/>
<reference key="1">
    <citation type="journal article" date="1995" name="J. Bacteriol.">
        <title>Genetic and molecular characterization of the polar flagellum of Vibrio parahaemolyticus.</title>
        <authorList>
            <person name="McCarter L.L."/>
        </authorList>
    </citation>
    <scope>NUCLEOTIDE SEQUENCE [GENOMIC DNA]</scope>
    <source>
        <strain>BB22</strain>
    </source>
</reference>
<reference key="2">
    <citation type="journal article" date="2003" name="Lancet">
        <title>Genome sequence of Vibrio parahaemolyticus: a pathogenic mechanism distinct from that of V. cholerae.</title>
        <authorList>
            <person name="Makino K."/>
            <person name="Oshima K."/>
            <person name="Kurokawa K."/>
            <person name="Yokoyama K."/>
            <person name="Uda T."/>
            <person name="Tagomori K."/>
            <person name="Iijima Y."/>
            <person name="Najima M."/>
            <person name="Nakano M."/>
            <person name="Yamashita A."/>
            <person name="Kubota Y."/>
            <person name="Kimura S."/>
            <person name="Yasunaga T."/>
            <person name="Honda T."/>
            <person name="Shinagawa H."/>
            <person name="Hattori M."/>
            <person name="Iida T."/>
        </authorList>
    </citation>
    <scope>NUCLEOTIDE SEQUENCE [LARGE SCALE GENOMIC DNA]</scope>
    <source>
        <strain>RIMD 2210633</strain>
    </source>
</reference>
<sequence>MAVNVNTNVSAMTAQRYLNNANSAQQTSMERLSSGFKINSAKDDAAGLQISNRLNVQSRGLDVAVRNANDGISIAQTAEGAMNETTNILQRMRDLSLQSANGSNSKAERVAIQEEVTALNDELNRIAETTSFGGNKLLNGTHGAKSFQIGADNGEAVMLELKDMRSDNKMMGGVSYQAESGKGKDWNVAQGKNDLKISLTDSFGQEQEININAKAGDDIEELATYINGQTDLVKASVDQDGKLQIFAGNNKVEGEVSFSGGLSGELGLGDDKKNVTVDTIDVTSVGGAQESVAIIDAALKYVDSHRAELGAFQNRFNHAISNLDNINENVNASKSRIKDTDFAKETTAMTKSQILSQASSSILAQAKQAPNSALSLLG</sequence>